<reference key="1">
    <citation type="journal article" date="1990" name="J. Mol. Evol.">
        <title>The rat P450 IID subfamily: complete sequences of four closely linked genes and evidence that gene conversions maintained sequence homogeneity at the heme-binding region of the cytochrome P450 active site.</title>
        <authorList>
            <person name="Matsunaga E."/>
            <person name="Umeno M."/>
            <person name="Gonzalez F.J."/>
        </authorList>
    </citation>
    <scope>NUCLEOTIDE SEQUENCE [GENOMIC DNA]</scope>
    <source>
        <strain>Sprague-Dawley</strain>
        <tissue>Liver</tissue>
    </source>
</reference>
<reference key="2">
    <citation type="journal article" date="1995" name="Biochem. Biophys. Res. Commun.">
        <title>cDNA cloning of a novel rat brain cytochrome P450 belonging to the CYP2D subfamily.</title>
        <authorList>
            <person name="Kawashima H."/>
            <person name="Strobel H.W."/>
        </authorList>
    </citation>
    <scope>NUCLEOTIDE SEQUENCE [MRNA]</scope>
    <source>
        <strain>Sprague-Dawley</strain>
    </source>
</reference>
<reference key="3">
    <citation type="journal article" date="1997" name="Arch. Biochem. Biophys.">
        <title>Expression of four rat CYP2D isoforms in Saccharomyces cerevisiae and their catalytic specificity.</title>
        <authorList>
            <person name="Wan J."/>
            <person name="Imaoka S."/>
            <person name="Chow T."/>
            <person name="Hiroi T."/>
            <person name="Yabusaki Y."/>
            <person name="Funae Y."/>
        </authorList>
    </citation>
    <scope>NUCLEOTIDE SEQUENCE [MRNA]</scope>
    <source>
        <strain>Sprague-Dawley</strain>
        <tissue>Brain</tissue>
    </source>
</reference>
<reference key="4">
    <citation type="journal article" date="2004" name="Genome Res.">
        <title>The status, quality, and expansion of the NIH full-length cDNA project: the Mammalian Gene Collection (MGC).</title>
        <authorList>
            <consortium name="The MGC Project Team"/>
        </authorList>
    </citation>
    <scope>NUCLEOTIDE SEQUENCE [LARGE SCALE MRNA]</scope>
    <source>
        <tissue>Brain</tissue>
    </source>
</reference>
<reference key="5">
    <citation type="journal article" date="1988" name="Biochem. Biophys. Res. Commun.">
        <title>Four species of cDNAs for cytochrome P450 isozymes immunorelated to P450C-M/F encode for members of P450IID subfamily, increasing the number of members within the subfamily.</title>
        <authorList>
            <person name="Ishida N."/>
            <person name="Tawaragi Y."/>
            <person name="Inuzuka C."/>
            <person name="Sugita O."/>
            <person name="Kubota I."/>
            <person name="Nakazato H."/>
            <person name="Noguchi T."/>
            <person name="Sassa S."/>
        </authorList>
    </citation>
    <scope>NUCLEOTIDE SEQUENCE [MRNA] OF 177-500</scope>
    <source>
        <strain>Sprague-Dawley</strain>
        <tissue>Liver</tissue>
    </source>
</reference>
<dbReference type="EC" id="1.14.14.1"/>
<dbReference type="EMBL" id="X52029">
    <property type="protein sequence ID" value="CAA36271.1"/>
    <property type="molecule type" value="Genomic_DNA"/>
</dbReference>
<dbReference type="EMBL" id="U48220">
    <property type="protein sequence ID" value="AAC52883.1"/>
    <property type="molecule type" value="mRNA"/>
</dbReference>
<dbReference type="EMBL" id="U48219">
    <property type="protein sequence ID" value="AAC52882.1"/>
    <property type="molecule type" value="mRNA"/>
</dbReference>
<dbReference type="EMBL" id="AB008425">
    <property type="protein sequence ID" value="BAA23125.1"/>
    <property type="molecule type" value="mRNA"/>
</dbReference>
<dbReference type="EMBL" id="BC093609">
    <property type="protein sequence ID" value="AAH93609.1"/>
    <property type="molecule type" value="mRNA"/>
</dbReference>
<dbReference type="EMBL" id="M22331">
    <property type="protein sequence ID" value="AAA41052.1"/>
    <property type="molecule type" value="mRNA"/>
</dbReference>
<dbReference type="RefSeq" id="NP_612524.1">
    <property type="nucleotide sequence ID" value="NM_138515.2"/>
</dbReference>
<dbReference type="SMR" id="Q64680"/>
<dbReference type="FunCoup" id="Q64680">
    <property type="interactions" value="47"/>
</dbReference>
<dbReference type="STRING" id="10116.ENSRNOP00000011880"/>
<dbReference type="BindingDB" id="Q64680"/>
<dbReference type="ChEMBL" id="CHEMBL4982"/>
<dbReference type="PaxDb" id="10116-ENSRNOP00000011880"/>
<dbReference type="Ensembl" id="ENSRNOT00000011880.7">
    <property type="protein sequence ID" value="ENSRNOP00000011880.4"/>
    <property type="gene ID" value="ENSRNOG00000032261.5"/>
</dbReference>
<dbReference type="GeneID" id="171522"/>
<dbReference type="KEGG" id="rno:171522"/>
<dbReference type="UCSC" id="RGD:620640">
    <property type="organism name" value="rat"/>
</dbReference>
<dbReference type="AGR" id="RGD:620640"/>
<dbReference type="CTD" id="171522"/>
<dbReference type="RGD" id="620640">
    <property type="gene designation" value="Cyp2d4"/>
</dbReference>
<dbReference type="eggNOG" id="KOG0156">
    <property type="taxonomic scope" value="Eukaryota"/>
</dbReference>
<dbReference type="GeneTree" id="ENSGT00940000153331"/>
<dbReference type="HOGENOM" id="CLU_001570_22_0_1"/>
<dbReference type="InParanoid" id="Q64680"/>
<dbReference type="OMA" id="RYGHVWK"/>
<dbReference type="OrthoDB" id="38533at9989"/>
<dbReference type="PhylomeDB" id="Q64680"/>
<dbReference type="TreeFam" id="TF352043"/>
<dbReference type="Reactome" id="R-RNO-211935">
    <property type="pathway name" value="Fatty acids"/>
</dbReference>
<dbReference type="Reactome" id="R-RNO-211958">
    <property type="pathway name" value="Miscellaneous substrates"/>
</dbReference>
<dbReference type="Reactome" id="R-RNO-211981">
    <property type="pathway name" value="Xenobiotics"/>
</dbReference>
<dbReference type="Reactome" id="R-RNO-211999">
    <property type="pathway name" value="CYP2E1 reactions"/>
</dbReference>
<dbReference type="Reactome" id="R-RNO-9027307">
    <property type="pathway name" value="Biosynthesis of maresin-like SPMs"/>
</dbReference>
<dbReference type="Reactome" id="R-RNO-9749641">
    <property type="pathway name" value="Aspirin ADME"/>
</dbReference>
<dbReference type="PRO" id="PR:Q64680"/>
<dbReference type="Proteomes" id="UP000002494">
    <property type="component" value="Chromosome 7"/>
</dbReference>
<dbReference type="Bgee" id="ENSRNOG00000032261">
    <property type="expression patterns" value="Expressed in jejunum and 18 other cell types or tissues"/>
</dbReference>
<dbReference type="GO" id="GO:0005737">
    <property type="term" value="C:cytoplasm"/>
    <property type="evidence" value="ECO:0000266"/>
    <property type="project" value="RGD"/>
</dbReference>
<dbReference type="GO" id="GO:0005789">
    <property type="term" value="C:endoplasmic reticulum membrane"/>
    <property type="evidence" value="ECO:0007669"/>
    <property type="project" value="UniProtKB-SubCell"/>
</dbReference>
<dbReference type="GO" id="GO:0043231">
    <property type="term" value="C:intracellular membrane-bounded organelle"/>
    <property type="evidence" value="ECO:0000318"/>
    <property type="project" value="GO_Central"/>
</dbReference>
<dbReference type="GO" id="GO:0005739">
    <property type="term" value="C:mitochondrion"/>
    <property type="evidence" value="ECO:0000266"/>
    <property type="project" value="RGD"/>
</dbReference>
<dbReference type="GO" id="GO:0062188">
    <property type="term" value="F:anandamide 11,12 epoxidase activity"/>
    <property type="evidence" value="ECO:0000266"/>
    <property type="project" value="RGD"/>
</dbReference>
<dbReference type="GO" id="GO:0062189">
    <property type="term" value="F:anandamide 14,15 epoxidase activity"/>
    <property type="evidence" value="ECO:0000266"/>
    <property type="project" value="RGD"/>
</dbReference>
<dbReference type="GO" id="GO:0062187">
    <property type="term" value="F:anandamide 8,9 epoxidase activity"/>
    <property type="evidence" value="ECO:0000266"/>
    <property type="project" value="RGD"/>
</dbReference>
<dbReference type="GO" id="GO:0008391">
    <property type="term" value="F:arachidonate monooxygenase activity"/>
    <property type="evidence" value="ECO:0000314"/>
    <property type="project" value="RGD"/>
</dbReference>
<dbReference type="GO" id="GO:0020037">
    <property type="term" value="F:heme binding"/>
    <property type="evidence" value="ECO:0000266"/>
    <property type="project" value="RGD"/>
</dbReference>
<dbReference type="GO" id="GO:0005506">
    <property type="term" value="F:iron ion binding"/>
    <property type="evidence" value="ECO:0007669"/>
    <property type="project" value="InterPro"/>
</dbReference>
<dbReference type="GO" id="GO:0004497">
    <property type="term" value="F:monooxygenase activity"/>
    <property type="evidence" value="ECO:0000314"/>
    <property type="project" value="RGD"/>
</dbReference>
<dbReference type="GO" id="GO:0016491">
    <property type="term" value="F:oxidoreductase activity"/>
    <property type="evidence" value="ECO:0000266"/>
    <property type="project" value="RGD"/>
</dbReference>
<dbReference type="GO" id="GO:0016712">
    <property type="term" value="F:oxidoreductase activity, acting on paired donors, with incorporation or reduction of molecular oxygen, reduced flavin or flavoprotein as one donor, and incorporation of one atom of oxygen"/>
    <property type="evidence" value="ECO:0000318"/>
    <property type="project" value="GO_Central"/>
</dbReference>
<dbReference type="GO" id="GO:0106309">
    <property type="term" value="F:progesterone 21-hydroxylase activity"/>
    <property type="evidence" value="ECO:0000314"/>
    <property type="project" value="RGD"/>
</dbReference>
<dbReference type="GO" id="GO:0009822">
    <property type="term" value="P:alkaloid catabolic process"/>
    <property type="evidence" value="ECO:0000266"/>
    <property type="project" value="RGD"/>
</dbReference>
<dbReference type="GO" id="GO:0009820">
    <property type="term" value="P:alkaloid metabolic process"/>
    <property type="evidence" value="ECO:0000266"/>
    <property type="project" value="RGD"/>
</dbReference>
<dbReference type="GO" id="GO:0019369">
    <property type="term" value="P:arachidonate metabolic process"/>
    <property type="evidence" value="ECO:0000314"/>
    <property type="project" value="RGD"/>
</dbReference>
<dbReference type="GO" id="GO:0008207">
    <property type="term" value="P:C21-steroid hormone metabolic process"/>
    <property type="evidence" value="ECO:0000315"/>
    <property type="project" value="RGD"/>
</dbReference>
<dbReference type="GO" id="GO:0009804">
    <property type="term" value="P:coumarin metabolic process"/>
    <property type="evidence" value="ECO:0000266"/>
    <property type="project" value="RGD"/>
</dbReference>
<dbReference type="GO" id="GO:0042416">
    <property type="term" value="P:dopamine biosynthetic process"/>
    <property type="evidence" value="ECO:0000314"/>
    <property type="project" value="RGD"/>
</dbReference>
<dbReference type="GO" id="GO:0042417">
    <property type="term" value="P:dopamine metabolic process"/>
    <property type="evidence" value="ECO:0000314"/>
    <property type="project" value="RGD"/>
</dbReference>
<dbReference type="GO" id="GO:0008210">
    <property type="term" value="P:estrogen metabolic process"/>
    <property type="evidence" value="ECO:0000266"/>
    <property type="project" value="RGD"/>
</dbReference>
<dbReference type="GO" id="GO:0007565">
    <property type="term" value="P:female pregnancy"/>
    <property type="evidence" value="ECO:0000270"/>
    <property type="project" value="RGD"/>
</dbReference>
<dbReference type="GO" id="GO:0033076">
    <property type="term" value="P:isoquinoline alkaloid metabolic process"/>
    <property type="evidence" value="ECO:0000266"/>
    <property type="project" value="RGD"/>
</dbReference>
<dbReference type="GO" id="GO:0016098">
    <property type="term" value="P:monoterpenoid metabolic process"/>
    <property type="evidence" value="ECO:0000266"/>
    <property type="project" value="RGD"/>
</dbReference>
<dbReference type="GO" id="GO:0090350">
    <property type="term" value="P:negative regulation of organofluorine metabolic process"/>
    <property type="evidence" value="ECO:0000266"/>
    <property type="project" value="RGD"/>
</dbReference>
<dbReference type="GO" id="GO:0070989">
    <property type="term" value="P:oxidative demethylation"/>
    <property type="evidence" value="ECO:0000315"/>
    <property type="project" value="RGD"/>
</dbReference>
<dbReference type="GO" id="GO:1901424">
    <property type="term" value="P:response to toluene"/>
    <property type="evidence" value="ECO:0000270"/>
    <property type="project" value="RGD"/>
</dbReference>
<dbReference type="GO" id="GO:0042572">
    <property type="term" value="P:retinol metabolic process"/>
    <property type="evidence" value="ECO:0000266"/>
    <property type="project" value="RGD"/>
</dbReference>
<dbReference type="GO" id="GO:0006587">
    <property type="term" value="P:serotonin biosynthetic process from tryptophan"/>
    <property type="evidence" value="ECO:0000314"/>
    <property type="project" value="RGD"/>
</dbReference>
<dbReference type="GO" id="GO:0008202">
    <property type="term" value="P:steroid metabolic process"/>
    <property type="evidence" value="ECO:0000266"/>
    <property type="project" value="RGD"/>
</dbReference>
<dbReference type="GO" id="GO:0042178">
    <property type="term" value="P:xenobiotic catabolic process"/>
    <property type="evidence" value="ECO:0000266"/>
    <property type="project" value="RGD"/>
</dbReference>
<dbReference type="GO" id="GO:0006805">
    <property type="term" value="P:xenobiotic metabolic process"/>
    <property type="evidence" value="ECO:0000314"/>
    <property type="project" value="RGD"/>
</dbReference>
<dbReference type="CDD" id="cd20663">
    <property type="entry name" value="CYP2D"/>
    <property type="match status" value="1"/>
</dbReference>
<dbReference type="FunFam" id="1.10.630.10:FF:000004">
    <property type="entry name" value="cytochrome P450 2D15 isoform X1"/>
    <property type="match status" value="1"/>
</dbReference>
<dbReference type="Gene3D" id="1.10.630.10">
    <property type="entry name" value="Cytochrome P450"/>
    <property type="match status" value="1"/>
</dbReference>
<dbReference type="InterPro" id="IPR001128">
    <property type="entry name" value="Cyt_P450"/>
</dbReference>
<dbReference type="InterPro" id="IPR017972">
    <property type="entry name" value="Cyt_P450_CS"/>
</dbReference>
<dbReference type="InterPro" id="IPR002401">
    <property type="entry name" value="Cyt_P450_E_grp-I"/>
</dbReference>
<dbReference type="InterPro" id="IPR008069">
    <property type="entry name" value="Cyt_P450_E_grp-I_CYP2D-like"/>
</dbReference>
<dbReference type="InterPro" id="IPR036396">
    <property type="entry name" value="Cyt_P450_sf"/>
</dbReference>
<dbReference type="InterPro" id="IPR050182">
    <property type="entry name" value="Cytochrome_P450_fam2"/>
</dbReference>
<dbReference type="PANTHER" id="PTHR24300:SF1">
    <property type="entry name" value="CYTOCHROME P450 2D6-RELATED"/>
    <property type="match status" value="1"/>
</dbReference>
<dbReference type="PANTHER" id="PTHR24300">
    <property type="entry name" value="CYTOCHROME P450 508A4-RELATED"/>
    <property type="match status" value="1"/>
</dbReference>
<dbReference type="Pfam" id="PF00067">
    <property type="entry name" value="p450"/>
    <property type="match status" value="1"/>
</dbReference>
<dbReference type="PRINTS" id="PR00463">
    <property type="entry name" value="EP450I"/>
</dbReference>
<dbReference type="PRINTS" id="PR01686">
    <property type="entry name" value="EP450ICYP2D"/>
</dbReference>
<dbReference type="PRINTS" id="PR00385">
    <property type="entry name" value="P450"/>
</dbReference>
<dbReference type="SUPFAM" id="SSF48264">
    <property type="entry name" value="Cytochrome P450"/>
    <property type="match status" value="1"/>
</dbReference>
<dbReference type="PROSITE" id="PS00086">
    <property type="entry name" value="CYTOCHROME_P450"/>
    <property type="match status" value="1"/>
</dbReference>
<evidence type="ECO:0000250" key="1"/>
<evidence type="ECO:0000305" key="2"/>
<gene>
    <name type="primary">Cyp2d4</name>
    <name type="synonym">Cyp2d-18</name>
    <name type="synonym">Cyp2d-4</name>
    <name type="synonym">Cyp2d18</name>
</gene>
<feature type="chain" id="PRO_0000051742" description="Cytochrome P450 2D4">
    <location>
        <begin position="1"/>
        <end position="500"/>
    </location>
</feature>
<feature type="binding site" description="axial binding residue" evidence="1">
    <location>
        <position position="446"/>
    </location>
    <ligand>
        <name>heme</name>
        <dbReference type="ChEBI" id="CHEBI:30413"/>
    </ligand>
    <ligandPart>
        <name>Fe</name>
        <dbReference type="ChEBI" id="CHEBI:18248"/>
    </ligandPart>
</feature>
<feature type="sequence conflict" description="In Ref. 1; CAA36271, 3; BAA23125 and 5; AAA41052." evidence="2" ref="1 3 5">
    <original>R</original>
    <variation>H</variation>
    <location>
        <position position="327"/>
    </location>
</feature>
<feature type="sequence conflict" description="In Ref. 1; CAA36271, 3; BAA23125 and 5; AAA41052." evidence="2" ref="1 3 5">
    <original>I</original>
    <variation>T</variation>
    <location>
        <position position="400"/>
    </location>
</feature>
<feature type="sequence conflict" description="In Ref. 1; CAA36271 and 5; AAA41052." evidence="2" ref="1 5">
    <original>A</original>
    <variation>T</variation>
    <location>
        <position position="473"/>
    </location>
</feature>
<feature type="sequence conflict" description="In Ref. 1; CAA36271 and 5; AAA41052." evidence="2" ref="1 5">
    <original>N</original>
    <variation>D</variation>
    <location>
        <position position="480"/>
    </location>
</feature>
<feature type="sequence conflict" description="In Ref. 1; CAA36271 and 5; AAA41052." evidence="2" ref="1 5">
    <original>V</original>
    <variation>I</variation>
    <location>
        <position position="483"/>
    </location>
</feature>
<organism>
    <name type="scientific">Rattus norvegicus</name>
    <name type="common">Rat</name>
    <dbReference type="NCBI Taxonomy" id="10116"/>
    <lineage>
        <taxon>Eukaryota</taxon>
        <taxon>Metazoa</taxon>
        <taxon>Chordata</taxon>
        <taxon>Craniata</taxon>
        <taxon>Vertebrata</taxon>
        <taxon>Euteleostomi</taxon>
        <taxon>Mammalia</taxon>
        <taxon>Eutheria</taxon>
        <taxon>Euarchontoglires</taxon>
        <taxon>Glires</taxon>
        <taxon>Rodentia</taxon>
        <taxon>Myomorpha</taxon>
        <taxon>Muroidea</taxon>
        <taxon>Muridae</taxon>
        <taxon>Murinae</taxon>
        <taxon>Rattus</taxon>
    </lineage>
</organism>
<name>CP2D4_RAT</name>
<sequence length="500" mass="56684">MRMPTGSELWPIAIFTIIFLLLVDLMHRRQRWTSRYPPGPVPWPVLGNLLQIDFQNMPAGFQKLRCRFGDLFSLQLAFESVVVLNGLPALREALVKYSEDTADRPPLHFNDQSGFGPRSQGVVLARYGPAWRQQRRFSVSTFRHFGLGKKSLEQWVTEEARCLCAAFADHSGFPFSPNTLLDKAVCNVIASLLFACRFEYNDPRFIRLLDLLKDTLEEESGFLPMLLNVFPMLLHIPGLLGKVFSGKKAFVAMLDELLTEHKVTWDPAQPPRDLTDAFLAEVEKAKGNPESSFNDENLRVVVADLFMAGMVTTSTTLTWALLFMILRPDVQCRVQQEIDEVIGQVRRPEMADQARMPFTNAVIHEVQRFADILPLGVPHKTSRDIEVQGFLIPKGTTLIINLSSVLKDETVWEKPLRFHPEHFLDAQGNFVKHEAFMPFSAGRRACLGEPLARMELFLFFTCLLQRFSFSVPAGQPRPSNYGVFGALTTPRPYQLCASPR</sequence>
<keyword id="KW-0256">Endoplasmic reticulum</keyword>
<keyword id="KW-0349">Heme</keyword>
<keyword id="KW-0408">Iron</keyword>
<keyword id="KW-0472">Membrane</keyword>
<keyword id="KW-0479">Metal-binding</keyword>
<keyword id="KW-0492">Microsome</keyword>
<keyword id="KW-0503">Monooxygenase</keyword>
<keyword id="KW-0560">Oxidoreductase</keyword>
<keyword id="KW-1185">Reference proteome</keyword>
<proteinExistence type="evidence at transcript level"/>
<accession>Q64680</accession>
<accession>O35107</accession>
<accession>P13108</accession>
<accession>Q566D3</accession>
<comment type="function">
    <text>Cytochromes P450 are a group of heme-thiolate monooxygenases. In liver microsomes, this enzyme is involved in an NADPH-dependent electron transport pathway. It oxidizes a variety of structurally unrelated compounds, including steroids, fatty acids, and xenobiotics.</text>
</comment>
<comment type="catalytic activity">
    <reaction>
        <text>an organic molecule + reduced [NADPH--hemoprotein reductase] + O2 = an alcohol + oxidized [NADPH--hemoprotein reductase] + H2O + H(+)</text>
        <dbReference type="Rhea" id="RHEA:17149"/>
        <dbReference type="Rhea" id="RHEA-COMP:11964"/>
        <dbReference type="Rhea" id="RHEA-COMP:11965"/>
        <dbReference type="ChEBI" id="CHEBI:15377"/>
        <dbReference type="ChEBI" id="CHEBI:15378"/>
        <dbReference type="ChEBI" id="CHEBI:15379"/>
        <dbReference type="ChEBI" id="CHEBI:30879"/>
        <dbReference type="ChEBI" id="CHEBI:57618"/>
        <dbReference type="ChEBI" id="CHEBI:58210"/>
        <dbReference type="ChEBI" id="CHEBI:142491"/>
        <dbReference type="EC" id="1.14.14.1"/>
    </reaction>
</comment>
<comment type="cofactor">
    <cofactor evidence="1">
        <name>heme</name>
        <dbReference type="ChEBI" id="CHEBI:30413"/>
    </cofactor>
</comment>
<comment type="subcellular location">
    <subcellularLocation>
        <location>Endoplasmic reticulum membrane</location>
        <topology>Peripheral membrane protein</topology>
    </subcellularLocation>
    <subcellularLocation>
        <location>Microsome membrane</location>
        <topology>Peripheral membrane protein</topology>
    </subcellularLocation>
</comment>
<comment type="tissue specificity">
    <text>Brain.</text>
</comment>
<comment type="similarity">
    <text evidence="2">Belongs to the cytochrome P450 family.</text>
</comment>
<protein>
    <recommendedName>
        <fullName>Cytochrome P450 2D4</fullName>
        <ecNumber>1.14.14.1</ecNumber>
    </recommendedName>
    <alternativeName>
        <fullName>CYPIID18</fullName>
    </alternativeName>
    <alternativeName>
        <fullName>CYPIID4</fullName>
    </alternativeName>
    <alternativeName>
        <fullName>Cytochrome P450 2D-29</fullName>
    </alternativeName>
    <alternativeName>
        <fullName>Cytochrome P450 2D-35</fullName>
    </alternativeName>
    <alternativeName>
        <fullName>Cytochrome P450 2D18</fullName>
    </alternativeName>
    <alternativeName>
        <fullName>Cytochrome P450-CMF3</fullName>
    </alternativeName>
    <alternativeName>
        <fullName>Cytochrome P450-DB4</fullName>
    </alternativeName>
    <alternativeName>
        <fullName>Debrisoquine 4-hydroxylase</fullName>
    </alternativeName>
</protein>